<accession>A0RJV9</accession>
<keyword id="KW-0456">Lyase</keyword>
<keyword id="KW-0501">Molybdenum cofactor biosynthesis</keyword>
<feature type="chain" id="PRO_1000054064" description="Cyclic pyranopterin monophosphate synthase">
    <location>
        <begin position="1"/>
        <end position="161"/>
    </location>
</feature>
<feature type="active site" evidence="1">
    <location>
        <position position="130"/>
    </location>
</feature>
<feature type="binding site" evidence="1">
    <location>
        <begin position="75"/>
        <end position="77"/>
    </location>
    <ligand>
        <name>substrate</name>
    </ligand>
</feature>
<feature type="binding site" evidence="1">
    <location>
        <begin position="115"/>
        <end position="116"/>
    </location>
    <ligand>
        <name>substrate</name>
    </ligand>
</feature>
<name>MOAC_BACAH</name>
<dbReference type="EC" id="4.6.1.17" evidence="1"/>
<dbReference type="EMBL" id="CP000485">
    <property type="protein sequence ID" value="ABK87502.1"/>
    <property type="molecule type" value="Genomic_DNA"/>
</dbReference>
<dbReference type="RefSeq" id="WP_000094141.1">
    <property type="nucleotide sequence ID" value="NC_008600.1"/>
</dbReference>
<dbReference type="SMR" id="A0RJV9"/>
<dbReference type="GeneID" id="45024593"/>
<dbReference type="KEGG" id="btl:BALH_4296"/>
<dbReference type="HOGENOM" id="CLU_074693_1_1_9"/>
<dbReference type="UniPathway" id="UPA00344"/>
<dbReference type="GO" id="GO:0061799">
    <property type="term" value="F:cyclic pyranopterin monophosphate synthase activity"/>
    <property type="evidence" value="ECO:0007669"/>
    <property type="project" value="UniProtKB-UniRule"/>
</dbReference>
<dbReference type="GO" id="GO:0006777">
    <property type="term" value="P:Mo-molybdopterin cofactor biosynthetic process"/>
    <property type="evidence" value="ECO:0007669"/>
    <property type="project" value="UniProtKB-UniRule"/>
</dbReference>
<dbReference type="CDD" id="cd01420">
    <property type="entry name" value="MoaC_PE"/>
    <property type="match status" value="1"/>
</dbReference>
<dbReference type="Gene3D" id="3.30.70.640">
    <property type="entry name" value="Molybdopterin cofactor biosynthesis C (MoaC) domain"/>
    <property type="match status" value="1"/>
</dbReference>
<dbReference type="HAMAP" id="MF_01224_B">
    <property type="entry name" value="MoaC_B"/>
    <property type="match status" value="1"/>
</dbReference>
<dbReference type="InterPro" id="IPR023045">
    <property type="entry name" value="MoaC"/>
</dbReference>
<dbReference type="InterPro" id="IPR047594">
    <property type="entry name" value="MoaC_bact/euk"/>
</dbReference>
<dbReference type="InterPro" id="IPR036522">
    <property type="entry name" value="MoaC_sf"/>
</dbReference>
<dbReference type="InterPro" id="IPR050105">
    <property type="entry name" value="MoCo_biosynth_MoaA/MoaC"/>
</dbReference>
<dbReference type="InterPro" id="IPR002820">
    <property type="entry name" value="Mopterin_CF_biosynth-C_dom"/>
</dbReference>
<dbReference type="NCBIfam" id="TIGR00581">
    <property type="entry name" value="moaC"/>
    <property type="match status" value="1"/>
</dbReference>
<dbReference type="NCBIfam" id="NF006870">
    <property type="entry name" value="PRK09364.1"/>
    <property type="match status" value="1"/>
</dbReference>
<dbReference type="PANTHER" id="PTHR22960:SF29">
    <property type="entry name" value="CYCLIC PYRANOPTERIN MONOPHOSPHATE SYNTHASE"/>
    <property type="match status" value="1"/>
</dbReference>
<dbReference type="PANTHER" id="PTHR22960">
    <property type="entry name" value="MOLYBDOPTERIN COFACTOR SYNTHESIS PROTEIN A"/>
    <property type="match status" value="1"/>
</dbReference>
<dbReference type="Pfam" id="PF01967">
    <property type="entry name" value="MoaC"/>
    <property type="match status" value="1"/>
</dbReference>
<dbReference type="SUPFAM" id="SSF55040">
    <property type="entry name" value="Molybdenum cofactor biosynthesis protein C, MoaC"/>
    <property type="match status" value="1"/>
</dbReference>
<reference key="1">
    <citation type="journal article" date="2007" name="J. Bacteriol.">
        <title>The complete genome sequence of Bacillus thuringiensis Al Hakam.</title>
        <authorList>
            <person name="Challacombe J.F."/>
            <person name="Altherr M.R."/>
            <person name="Xie G."/>
            <person name="Bhotika S.S."/>
            <person name="Brown N."/>
            <person name="Bruce D."/>
            <person name="Campbell C.S."/>
            <person name="Campbell M.L."/>
            <person name="Chen J."/>
            <person name="Chertkov O."/>
            <person name="Cleland C."/>
            <person name="Dimitrijevic M."/>
            <person name="Doggett N.A."/>
            <person name="Fawcett J.J."/>
            <person name="Glavina T."/>
            <person name="Goodwin L.A."/>
            <person name="Green L.D."/>
            <person name="Han C.S."/>
            <person name="Hill K.K."/>
            <person name="Hitchcock P."/>
            <person name="Jackson P.J."/>
            <person name="Keim P."/>
            <person name="Kewalramani A.R."/>
            <person name="Longmire J."/>
            <person name="Lucas S."/>
            <person name="Malfatti S."/>
            <person name="Martinez D."/>
            <person name="McMurry K."/>
            <person name="Meincke L.J."/>
            <person name="Misra M."/>
            <person name="Moseman B.L."/>
            <person name="Mundt M."/>
            <person name="Munk A.C."/>
            <person name="Okinaka R.T."/>
            <person name="Parson-Quintana B."/>
            <person name="Reilly L.P."/>
            <person name="Richardson P."/>
            <person name="Robinson D.L."/>
            <person name="Saunders E."/>
            <person name="Tapia R."/>
            <person name="Tesmer J.G."/>
            <person name="Thayer N."/>
            <person name="Thompson L.S."/>
            <person name="Tice H."/>
            <person name="Ticknor L.O."/>
            <person name="Wills P.L."/>
            <person name="Gilna P."/>
            <person name="Brettin T.S."/>
        </authorList>
    </citation>
    <scope>NUCLEOTIDE SEQUENCE [LARGE SCALE GENOMIC DNA]</scope>
    <source>
        <strain>Al Hakam</strain>
    </source>
</reference>
<organism>
    <name type="scientific">Bacillus thuringiensis (strain Al Hakam)</name>
    <dbReference type="NCBI Taxonomy" id="412694"/>
    <lineage>
        <taxon>Bacteria</taxon>
        <taxon>Bacillati</taxon>
        <taxon>Bacillota</taxon>
        <taxon>Bacilli</taxon>
        <taxon>Bacillales</taxon>
        <taxon>Bacillaceae</taxon>
        <taxon>Bacillus</taxon>
        <taxon>Bacillus cereus group</taxon>
    </lineage>
</organism>
<evidence type="ECO:0000255" key="1">
    <source>
        <dbReference type="HAMAP-Rule" id="MF_01224"/>
    </source>
</evidence>
<comment type="function">
    <text evidence="1">Catalyzes the conversion of (8S)-3',8-cyclo-7,8-dihydroguanosine 5'-triphosphate to cyclic pyranopterin monophosphate (cPMP).</text>
</comment>
<comment type="catalytic activity">
    <reaction evidence="1">
        <text>(8S)-3',8-cyclo-7,8-dihydroguanosine 5'-triphosphate = cyclic pyranopterin phosphate + diphosphate</text>
        <dbReference type="Rhea" id="RHEA:49580"/>
        <dbReference type="ChEBI" id="CHEBI:33019"/>
        <dbReference type="ChEBI" id="CHEBI:59648"/>
        <dbReference type="ChEBI" id="CHEBI:131766"/>
        <dbReference type="EC" id="4.6.1.17"/>
    </reaction>
</comment>
<comment type="pathway">
    <text evidence="1">Cofactor biosynthesis; molybdopterin biosynthesis.</text>
</comment>
<comment type="subunit">
    <text evidence="1">Homohexamer; trimer of dimers.</text>
</comment>
<comment type="similarity">
    <text evidence="1">Belongs to the MoaC family.</text>
</comment>
<proteinExistence type="inferred from homology"/>
<sequence length="161" mass="17499">MSSFTHFNDQGRAKMVDISDKKATVRTAIACSSIVVTKEIYDKISHNEIGKGDVLAVAQIAGIMAAKRTSDIIPMCHPLLLKGVDVSFDWKQSDEQYRLLIEVKVKTEGSTGVEMEALTAASATALTVYDMCKAVDKGMIIGETYLLEKTGGKSGDYTRKS</sequence>
<protein>
    <recommendedName>
        <fullName evidence="1">Cyclic pyranopterin monophosphate synthase</fullName>
        <ecNumber evidence="1">4.6.1.17</ecNumber>
    </recommendedName>
    <alternativeName>
        <fullName evidence="1">Molybdenum cofactor biosynthesis protein C</fullName>
    </alternativeName>
</protein>
<gene>
    <name evidence="1" type="primary">moaC</name>
    <name type="ordered locus">BALH_4296</name>
</gene>